<comment type="subcellular location">
    <subcellularLocation>
        <location>Secreted</location>
    </subcellularLocation>
</comment>
<comment type="domain">
    <text>Avian ovomucoid consists of three homologous, tandem Kazal family inhibitory domains.</text>
</comment>
<evidence type="ECO:0000255" key="1">
    <source>
        <dbReference type="PROSITE-ProRule" id="PRU00798"/>
    </source>
</evidence>
<keyword id="KW-0903">Direct protein sequencing</keyword>
<keyword id="KW-1015">Disulfide bond</keyword>
<keyword id="KW-0325">Glycoprotein</keyword>
<keyword id="KW-0646">Protease inhibitor</keyword>
<keyword id="KW-0677">Repeat</keyword>
<keyword id="KW-0964">Secreted</keyword>
<keyword id="KW-0722">Serine protease inhibitor</keyword>
<accession>P52266</accession>
<proteinExistence type="evidence at protein level"/>
<protein>
    <recommendedName>
        <fullName>Ovomucoid</fullName>
    </recommendedName>
</protein>
<sequence>TATVDCSGYPQSACPQDYVPFCGSDNKTYSNKCNFCNAVADSNGTLTLSHFGKC</sequence>
<organism>
    <name type="scientific">Gallirallus australis</name>
    <name type="common">Weka</name>
    <dbReference type="NCBI Taxonomy" id="9125"/>
    <lineage>
        <taxon>Eukaryota</taxon>
        <taxon>Metazoa</taxon>
        <taxon>Chordata</taxon>
        <taxon>Craniata</taxon>
        <taxon>Vertebrata</taxon>
        <taxon>Euteleostomi</taxon>
        <taxon>Archelosauria</taxon>
        <taxon>Archosauria</taxon>
        <taxon>Dinosauria</taxon>
        <taxon>Saurischia</taxon>
        <taxon>Theropoda</taxon>
        <taxon>Coelurosauria</taxon>
        <taxon>Aves</taxon>
        <taxon>Neognathae</taxon>
        <taxon>Neoaves</taxon>
        <taxon>Gruiformes</taxon>
        <taxon>Rallidae</taxon>
        <taxon>Gallirallus</taxon>
    </lineage>
</organism>
<reference key="1">
    <citation type="journal article" date="1990" name="J. Protein Chem.">
        <title>Amino acid sequences of ovomucoid third domain from 25 additional species of birds.</title>
        <authorList>
            <person name="Laskowski M. Jr."/>
            <person name="Apostol I."/>
            <person name="Ardelt W."/>
            <person name="Cook J."/>
            <person name="Giletto A."/>
            <person name="Kelly C.A."/>
            <person name="Lu W."/>
            <person name="Park S.J."/>
            <person name="Qasim M.A."/>
            <person name="Whatley H.E."/>
            <person name="Wieczorek A."/>
            <person name="Wynn R."/>
        </authorList>
    </citation>
    <scope>PROTEIN SEQUENCE</scope>
</reference>
<name>IOVO_GALAS</name>
<dbReference type="PIR" id="D61494">
    <property type="entry name" value="D61494"/>
</dbReference>
<dbReference type="SMR" id="P52266"/>
<dbReference type="GO" id="GO:0005576">
    <property type="term" value="C:extracellular region"/>
    <property type="evidence" value="ECO:0007669"/>
    <property type="project" value="UniProtKB-SubCell"/>
</dbReference>
<dbReference type="GO" id="GO:0004867">
    <property type="term" value="F:serine-type endopeptidase inhibitor activity"/>
    <property type="evidence" value="ECO:0007669"/>
    <property type="project" value="UniProtKB-KW"/>
</dbReference>
<dbReference type="FunFam" id="3.30.60.30:FF:000037">
    <property type="entry name" value="Ovomucoid"/>
    <property type="match status" value="1"/>
</dbReference>
<dbReference type="Gene3D" id="3.30.60.30">
    <property type="match status" value="1"/>
</dbReference>
<dbReference type="InterPro" id="IPR051597">
    <property type="entry name" value="Bifunctional_prot_inhibitor"/>
</dbReference>
<dbReference type="InterPro" id="IPR002350">
    <property type="entry name" value="Kazal_dom"/>
</dbReference>
<dbReference type="InterPro" id="IPR036058">
    <property type="entry name" value="Kazal_dom_sf"/>
</dbReference>
<dbReference type="InterPro" id="IPR001239">
    <property type="entry name" value="Prot_inh_Kazal-m"/>
</dbReference>
<dbReference type="PANTHER" id="PTHR47729:SF1">
    <property type="entry name" value="OVOMUCOID-LIKE-RELATED"/>
    <property type="match status" value="1"/>
</dbReference>
<dbReference type="PANTHER" id="PTHR47729">
    <property type="entry name" value="SERINE PEPTIDASE INHIBITOR, KAZAL TYPE 2, TANDEM DUPLICATE 1-RELATED"/>
    <property type="match status" value="1"/>
</dbReference>
<dbReference type="Pfam" id="PF00050">
    <property type="entry name" value="Kazal_1"/>
    <property type="match status" value="1"/>
</dbReference>
<dbReference type="PRINTS" id="PR00290">
    <property type="entry name" value="KAZALINHBTR"/>
</dbReference>
<dbReference type="SMART" id="SM00280">
    <property type="entry name" value="KAZAL"/>
    <property type="match status" value="1"/>
</dbReference>
<dbReference type="SUPFAM" id="SSF100895">
    <property type="entry name" value="Kazal-type serine protease inhibitors"/>
    <property type="match status" value="1"/>
</dbReference>
<dbReference type="PROSITE" id="PS00282">
    <property type="entry name" value="KAZAL_1"/>
    <property type="match status" value="1"/>
</dbReference>
<dbReference type="PROSITE" id="PS51465">
    <property type="entry name" value="KAZAL_2"/>
    <property type="match status" value="1"/>
</dbReference>
<feature type="chain" id="PRO_0000073114" description="Ovomucoid">
    <location>
        <begin position="1" status="less than"/>
        <end position="54" status="greater than"/>
    </location>
</feature>
<feature type="domain" description="Kazal-like" evidence="1">
    <location>
        <begin position="4"/>
        <end position="54"/>
    </location>
</feature>
<feature type="site" description="Reactive bond 3">
    <location>
        <begin position="16"/>
        <end position="17"/>
    </location>
</feature>
<feature type="glycosylation site" description="N-linked (GlcNAc...) asparagine">
    <location>
        <position position="43"/>
    </location>
</feature>
<feature type="disulfide bond">
    <location>
        <begin position="6"/>
        <end position="36"/>
    </location>
</feature>
<feature type="disulfide bond">
    <location>
        <begin position="14"/>
        <end position="33"/>
    </location>
</feature>
<feature type="disulfide bond">
    <location>
        <begin position="22"/>
        <end position="54"/>
    </location>
</feature>
<feature type="non-terminal residue">
    <location>
        <position position="1"/>
    </location>
</feature>
<feature type="non-terminal residue">
    <location>
        <position position="54"/>
    </location>
</feature>